<feature type="chain" id="PRO_0000078113" description="Gamma-tubulin complex component 2">
    <location>
        <begin position="1"/>
        <end position="902"/>
    </location>
</feature>
<feature type="region of interest" description="Disordered" evidence="1">
    <location>
        <begin position="874"/>
        <end position="902"/>
    </location>
</feature>
<feature type="modified residue" description="Phosphotyrosine" evidence="17">
    <location>
        <position position="83"/>
    </location>
</feature>
<feature type="splice variant" id="VSP_044698" description="In isoform 2." evidence="9">
    <location>
        <begin position="1"/>
        <end position="130"/>
    </location>
</feature>
<feature type="splice variant" id="VSP_045982" description="In isoform 3." evidence="10">
    <original>I</original>
    <variation>IVLLRWNLALSPRLKCSGVISAHCNLHLP</variation>
    <location>
        <position position="205"/>
    </location>
</feature>
<feature type="sequence variant" id="VAR_022126" description="In dbSNP:rs2298121.">
    <original>A</original>
    <variation>T</variation>
    <location>
        <position position="111"/>
    </location>
</feature>
<feature type="sequence variant" id="VAR_049249" description="In dbSNP:rs11101682.">
    <original>I</original>
    <variation>T</variation>
    <location>
        <position position="193"/>
    </location>
</feature>
<feature type="sequence variant" id="VAR_083747" description="In CDCBM15; uncertain significance; dbSNP:rs200129338." evidence="4">
    <original>R</original>
    <variation>C</variation>
    <location>
        <position position="297"/>
    </location>
</feature>
<feature type="sequence variant" id="VAR_083748" description="In CDCBM15; uncertain significance; dbSNP:rs34832477." evidence="4">
    <original>R</original>
    <variation>C</variation>
    <location>
        <position position="333"/>
    </location>
</feature>
<feature type="sequence variant" id="VAR_083749" description="In CDCBM15; uncertain significance; dbSNP:rs1449999247." evidence="4">
    <original>A</original>
    <variation>P</variation>
    <location>
        <position position="615"/>
    </location>
</feature>
<feature type="sequence variant" id="VAR_049250" description="In dbSNP:rs11101677.">
    <original>A</original>
    <variation>T</variation>
    <location>
        <position position="809"/>
    </location>
</feature>
<feature type="sequence conflict" description="In Ref. 2; BAG59730." evidence="11" ref="2">
    <original>E</original>
    <variation>G</variation>
    <location>
        <position position="279"/>
    </location>
</feature>
<feature type="sequence conflict" description="In Ref. 4; BC005011." evidence="11" ref="4">
    <original>L</original>
    <variation>F</variation>
    <location>
        <position position="641"/>
    </location>
</feature>
<feature type="sequence conflict" description="In Ref. 4; AAI43248." evidence="11" ref="4">
    <original>R</original>
    <variation>G</variation>
    <location sequence="Q9BSJ2-4">
        <position position="209"/>
    </location>
</feature>
<evidence type="ECO:0000256" key="1">
    <source>
        <dbReference type="SAM" id="MobiDB-lite"/>
    </source>
</evidence>
<evidence type="ECO:0000269" key="2">
    <source>
    </source>
</evidence>
<evidence type="ECO:0000269" key="3">
    <source>
    </source>
</evidence>
<evidence type="ECO:0000269" key="4">
    <source>
    </source>
</evidence>
<evidence type="ECO:0000269" key="5">
    <source>
    </source>
</evidence>
<evidence type="ECO:0000269" key="6">
    <source>
    </source>
</evidence>
<evidence type="ECO:0000269" key="7">
    <source>
    </source>
</evidence>
<evidence type="ECO:0000269" key="8">
    <source>
    </source>
</evidence>
<evidence type="ECO:0000303" key="9">
    <source>
    </source>
</evidence>
<evidence type="ECO:0000303" key="10">
    <source>
    </source>
</evidence>
<evidence type="ECO:0000305" key="11"/>
<evidence type="ECO:0007744" key="12">
    <source>
        <dbReference type="PDB" id="8Q62"/>
    </source>
</evidence>
<evidence type="ECO:0007744" key="13">
    <source>
        <dbReference type="PDB" id="8RX1"/>
    </source>
</evidence>
<evidence type="ECO:0007744" key="14">
    <source>
        <dbReference type="PDB" id="8VRD"/>
    </source>
</evidence>
<evidence type="ECO:0007744" key="15">
    <source>
        <dbReference type="PDB" id="8VRJ"/>
    </source>
</evidence>
<evidence type="ECO:0007744" key="16">
    <source>
        <dbReference type="PDB" id="8VRK"/>
    </source>
</evidence>
<evidence type="ECO:0007744" key="17">
    <source>
    </source>
</evidence>
<organism>
    <name type="scientific">Homo sapiens</name>
    <name type="common">Human</name>
    <dbReference type="NCBI Taxonomy" id="9606"/>
    <lineage>
        <taxon>Eukaryota</taxon>
        <taxon>Metazoa</taxon>
        <taxon>Chordata</taxon>
        <taxon>Craniata</taxon>
        <taxon>Vertebrata</taxon>
        <taxon>Euteleostomi</taxon>
        <taxon>Mammalia</taxon>
        <taxon>Eutheria</taxon>
        <taxon>Euarchontoglires</taxon>
        <taxon>Primates</taxon>
        <taxon>Haplorrhini</taxon>
        <taxon>Catarrhini</taxon>
        <taxon>Hominidae</taxon>
        <taxon>Homo</taxon>
    </lineage>
</organism>
<dbReference type="EMBL" id="AF042379">
    <property type="protein sequence ID" value="AAC39728.1"/>
    <property type="molecule type" value="mRNA"/>
</dbReference>
<dbReference type="EMBL" id="AK297251">
    <property type="protein sequence ID" value="BAG59730.1"/>
    <property type="molecule type" value="mRNA"/>
</dbReference>
<dbReference type="EMBL" id="AL360181">
    <property type="status" value="NOT_ANNOTATED_CDS"/>
    <property type="molecule type" value="Genomic_DNA"/>
</dbReference>
<dbReference type="EMBL" id="AL592071">
    <property type="status" value="NOT_ANNOTATED_CDS"/>
    <property type="molecule type" value="Genomic_DNA"/>
</dbReference>
<dbReference type="EMBL" id="BC005011">
    <property type="status" value="NOT_ANNOTATED_CDS"/>
    <property type="molecule type" value="mRNA"/>
</dbReference>
<dbReference type="EMBL" id="BC093770">
    <property type="protein sequence ID" value="AAH93770.1"/>
    <property type="molecule type" value="mRNA"/>
</dbReference>
<dbReference type="EMBL" id="BC111957">
    <property type="protein sequence ID" value="AAI11958.1"/>
    <property type="molecule type" value="mRNA"/>
</dbReference>
<dbReference type="EMBL" id="BC143247">
    <property type="protein sequence ID" value="AAI43248.1"/>
    <property type="molecule type" value="mRNA"/>
</dbReference>
<dbReference type="CCDS" id="CCDS58104.1">
    <molecule id="Q9BSJ2-3"/>
</dbReference>
<dbReference type="CCDS" id="CCDS58105.1">
    <molecule id="Q9BSJ2-4"/>
</dbReference>
<dbReference type="CCDS" id="CCDS7676.1">
    <molecule id="Q9BSJ2-1"/>
</dbReference>
<dbReference type="RefSeq" id="NP_001243546.1">
    <molecule id="Q9BSJ2-4"/>
    <property type="nucleotide sequence ID" value="NM_001256617.2"/>
</dbReference>
<dbReference type="RefSeq" id="NP_001243547.1">
    <molecule id="Q9BSJ2-3"/>
    <property type="nucleotide sequence ID" value="NM_001256618.2"/>
</dbReference>
<dbReference type="RefSeq" id="NP_006650.1">
    <molecule id="Q9BSJ2-1"/>
    <property type="nucleotide sequence ID" value="NM_006659.4"/>
</dbReference>
<dbReference type="PDB" id="6V6B">
    <property type="method" value="EM"/>
    <property type="resolution" value="3.80 A"/>
    <property type="chains" value="C=1-902"/>
</dbReference>
<dbReference type="PDB" id="6V6S">
    <property type="method" value="EM"/>
    <property type="resolution" value="4.30 A"/>
    <property type="chains" value="A/C/E/G/M=1-902"/>
</dbReference>
<dbReference type="PDB" id="6X0V">
    <property type="method" value="EM"/>
    <property type="resolution" value="4.50 A"/>
    <property type="chains" value="F=1-902"/>
</dbReference>
<dbReference type="PDB" id="7AS4">
    <property type="method" value="EM"/>
    <property type="resolution" value="4.13 A"/>
    <property type="chains" value="A/C/E/G/M=1-902"/>
</dbReference>
<dbReference type="PDB" id="7QJ0">
    <property type="method" value="EM"/>
    <property type="resolution" value="5.32 A"/>
    <property type="chains" value="G=1-902"/>
</dbReference>
<dbReference type="PDB" id="7QJ1">
    <property type="method" value="EM"/>
    <property type="resolution" value="7.00 A"/>
    <property type="chains" value="G=1-902"/>
</dbReference>
<dbReference type="PDB" id="7QJ2">
    <property type="method" value="EM"/>
    <property type="resolution" value="8.60 A"/>
    <property type="chains" value="E/G=1-902"/>
</dbReference>
<dbReference type="PDB" id="7QJ3">
    <property type="method" value="EM"/>
    <property type="resolution" value="7.60 A"/>
    <property type="chains" value="G/M=1-902"/>
</dbReference>
<dbReference type="PDB" id="7QJ4">
    <property type="method" value="EM"/>
    <property type="resolution" value="9.00 A"/>
    <property type="chains" value="E/G/M=1-902"/>
</dbReference>
<dbReference type="PDB" id="7QJ5">
    <property type="method" value="EM"/>
    <property type="resolution" value="8.70 A"/>
    <property type="chains" value="A/C/E/G/M=1-902"/>
</dbReference>
<dbReference type="PDB" id="7QJ6">
    <property type="method" value="EM"/>
    <property type="resolution" value="7.80 A"/>
    <property type="chains" value="C/E/G=1-902"/>
</dbReference>
<dbReference type="PDB" id="7QJ7">
    <property type="method" value="EM"/>
    <property type="resolution" value="8.70 A"/>
    <property type="chains" value="A/C/E/G=1-902"/>
</dbReference>
<dbReference type="PDB" id="7QJ8">
    <property type="method" value="EM"/>
    <property type="resolution" value="8.70 A"/>
    <property type="chains" value="C/E/G/M=1-902"/>
</dbReference>
<dbReference type="PDB" id="7QJ9">
    <property type="method" value="EM"/>
    <property type="resolution" value="8.10 A"/>
    <property type="chains" value="C/E/G=1-902"/>
</dbReference>
<dbReference type="PDB" id="7QJA">
    <property type="method" value="EM"/>
    <property type="resolution" value="9.20 A"/>
    <property type="chains" value="A/C/E/G=1-902"/>
</dbReference>
<dbReference type="PDB" id="7QJB">
    <property type="method" value="EM"/>
    <property type="resolution" value="9.20 A"/>
    <property type="chains" value="C/E/G/M=1-902"/>
</dbReference>
<dbReference type="PDB" id="7QJC">
    <property type="method" value="EM"/>
    <property type="resolution" value="16.10 A"/>
    <property type="chains" value="A/C/E/G/M=1-902"/>
</dbReference>
<dbReference type="PDB" id="7QJD">
    <property type="method" value="EM"/>
    <property type="resolution" value="7.10 A"/>
    <property type="chains" value="A/C/E/G/M=1-902"/>
</dbReference>
<dbReference type="PDB" id="8Q62">
    <property type="method" value="EM"/>
    <property type="resolution" value="3.72 A"/>
    <property type="chains" value="A/C/E/G/M=1-902"/>
</dbReference>
<dbReference type="PDB" id="8RX1">
    <property type="method" value="EM"/>
    <property type="resolution" value="3.57 A"/>
    <property type="chains" value="A/C/E/M/f/k=1-902"/>
</dbReference>
<dbReference type="PDB" id="8VRD">
    <property type="method" value="EM"/>
    <property type="resolution" value="7.00 A"/>
    <property type="chains" value="A/C/E/G/M=1-902"/>
</dbReference>
<dbReference type="PDB" id="8VRJ">
    <property type="method" value="EM"/>
    <property type="resolution" value="7.70 A"/>
    <property type="chains" value="A/C/E/G/M=1-902"/>
</dbReference>
<dbReference type="PDB" id="8VRK">
    <property type="method" value="EM"/>
    <property type="resolution" value="8.50 A"/>
    <property type="chains" value="A/C/E/G/M=1-902"/>
</dbReference>
<dbReference type="PDB" id="9H9P">
    <property type="method" value="EM"/>
    <property type="resolution" value="4.50 A"/>
    <property type="chains" value="M=1-902"/>
</dbReference>
<dbReference type="PDBsum" id="6V6B"/>
<dbReference type="PDBsum" id="6V6S"/>
<dbReference type="PDBsum" id="6X0V"/>
<dbReference type="PDBsum" id="7AS4"/>
<dbReference type="PDBsum" id="7QJ0"/>
<dbReference type="PDBsum" id="7QJ1"/>
<dbReference type="PDBsum" id="7QJ2"/>
<dbReference type="PDBsum" id="7QJ3"/>
<dbReference type="PDBsum" id="7QJ4"/>
<dbReference type="PDBsum" id="7QJ5"/>
<dbReference type="PDBsum" id="7QJ6"/>
<dbReference type="PDBsum" id="7QJ7"/>
<dbReference type="PDBsum" id="7QJ8"/>
<dbReference type="PDBsum" id="7QJ9"/>
<dbReference type="PDBsum" id="7QJA"/>
<dbReference type="PDBsum" id="7QJB"/>
<dbReference type="PDBsum" id="7QJC"/>
<dbReference type="PDBsum" id="7QJD"/>
<dbReference type="PDBsum" id="8Q62"/>
<dbReference type="PDBsum" id="8RX1"/>
<dbReference type="PDBsum" id="8VRD"/>
<dbReference type="PDBsum" id="8VRJ"/>
<dbReference type="PDBsum" id="8VRK"/>
<dbReference type="PDBsum" id="9H9P"/>
<dbReference type="EMDB" id="EMD-11888"/>
<dbReference type="EMDB" id="EMD-14005"/>
<dbReference type="EMDB" id="EMD-14006"/>
<dbReference type="EMDB" id="EMD-14007"/>
<dbReference type="EMDB" id="EMD-14008"/>
<dbReference type="EMDB" id="EMD-14009"/>
<dbReference type="EMDB" id="EMD-14010"/>
<dbReference type="EMDB" id="EMD-14011"/>
<dbReference type="EMDB" id="EMD-14012"/>
<dbReference type="EMDB" id="EMD-14013"/>
<dbReference type="EMDB" id="EMD-14014"/>
<dbReference type="EMDB" id="EMD-14015"/>
<dbReference type="EMDB" id="EMD-14016"/>
<dbReference type="EMDB" id="EMD-14017"/>
<dbReference type="EMDB" id="EMD-14018"/>
<dbReference type="EMDB" id="EMD-18181"/>
<dbReference type="EMDB" id="EMD-18182"/>
<dbReference type="EMDB" id="EMD-18193"/>
<dbReference type="EMDB" id="EMD-19570"/>
<dbReference type="EMDB" id="EMD-21067"/>
<dbReference type="EMDB" id="EMD-21073"/>
<dbReference type="EMDB" id="EMD-21985"/>
<dbReference type="EMDB" id="EMD-43481"/>
<dbReference type="EMDB" id="EMD-43482"/>
<dbReference type="EMDB" id="EMD-43483"/>
<dbReference type="SMR" id="Q9BSJ2"/>
<dbReference type="BioGRID" id="116055">
    <property type="interactions" value="204"/>
</dbReference>
<dbReference type="CORUM" id="Q9BSJ2"/>
<dbReference type="FunCoup" id="Q9BSJ2">
    <property type="interactions" value="2889"/>
</dbReference>
<dbReference type="IntAct" id="Q9BSJ2">
    <property type="interactions" value="113"/>
</dbReference>
<dbReference type="MINT" id="Q9BSJ2"/>
<dbReference type="STRING" id="9606.ENSP00000446093"/>
<dbReference type="GlyGen" id="Q9BSJ2">
    <property type="glycosylation" value="3 sites, 1 O-linked glycan (2 sites)"/>
</dbReference>
<dbReference type="iPTMnet" id="Q9BSJ2"/>
<dbReference type="MetOSite" id="Q9BSJ2"/>
<dbReference type="PhosphoSitePlus" id="Q9BSJ2"/>
<dbReference type="SwissPalm" id="Q9BSJ2"/>
<dbReference type="BioMuta" id="TUBGCP2"/>
<dbReference type="DMDM" id="21450889"/>
<dbReference type="jPOST" id="Q9BSJ2"/>
<dbReference type="MassIVE" id="Q9BSJ2"/>
<dbReference type="PaxDb" id="9606-ENSP00000446093"/>
<dbReference type="PeptideAtlas" id="Q9BSJ2"/>
<dbReference type="ProteomicsDB" id="26543"/>
<dbReference type="ProteomicsDB" id="26604"/>
<dbReference type="ProteomicsDB" id="78900">
    <molecule id="Q9BSJ2-1"/>
</dbReference>
<dbReference type="Pumba" id="Q9BSJ2"/>
<dbReference type="Antibodypedia" id="46457">
    <property type="antibodies" value="177 antibodies from 30 providers"/>
</dbReference>
<dbReference type="DNASU" id="10844"/>
<dbReference type="Ensembl" id="ENST00000252936.8">
    <molecule id="Q9BSJ2-1"/>
    <property type="protein sequence ID" value="ENSP00000252936.3"/>
    <property type="gene ID" value="ENSG00000130640.15"/>
</dbReference>
<dbReference type="Ensembl" id="ENST00000417178.7">
    <molecule id="Q9BSJ2-3"/>
    <property type="protein sequence ID" value="ENSP00000395666.2"/>
    <property type="gene ID" value="ENSG00000130640.15"/>
</dbReference>
<dbReference type="Ensembl" id="ENST00000543663.6">
    <molecule id="Q9BSJ2-4"/>
    <property type="protein sequence ID" value="ENSP00000446093.1"/>
    <property type="gene ID" value="ENSG00000130640.15"/>
</dbReference>
<dbReference type="Ensembl" id="ENST00000682123.1">
    <molecule id="Q9BSJ2-1"/>
    <property type="protein sequence ID" value="ENSP00000507610.1"/>
    <property type="gene ID" value="ENSG00000130640.15"/>
</dbReference>
<dbReference type="Ensembl" id="ENST00000682515.1">
    <molecule id="Q9BSJ2-1"/>
    <property type="protein sequence ID" value="ENSP00000506731.1"/>
    <property type="gene ID" value="ENSG00000130640.15"/>
</dbReference>
<dbReference type="Ensembl" id="ENST00000683612.1">
    <molecule id="Q9BSJ2-1"/>
    <property type="protein sequence ID" value="ENSP00000507482.1"/>
    <property type="gene ID" value="ENSG00000130640.15"/>
</dbReference>
<dbReference type="GeneID" id="10844"/>
<dbReference type="KEGG" id="hsa:10844"/>
<dbReference type="MANE-Select" id="ENST00000252936.8">
    <property type="protein sequence ID" value="ENSP00000252936.3"/>
    <property type="RefSeq nucleotide sequence ID" value="NM_006659.4"/>
    <property type="RefSeq protein sequence ID" value="NP_006650.1"/>
</dbReference>
<dbReference type="UCSC" id="uc001lmg.2">
    <molecule id="Q9BSJ2-1"/>
    <property type="organism name" value="human"/>
</dbReference>
<dbReference type="AGR" id="HGNC:18599"/>
<dbReference type="CTD" id="10844"/>
<dbReference type="DisGeNET" id="10844"/>
<dbReference type="GeneCards" id="TUBGCP2"/>
<dbReference type="HGNC" id="HGNC:18599">
    <property type="gene designation" value="TUBGCP2"/>
</dbReference>
<dbReference type="HPA" id="ENSG00000130640">
    <property type="expression patterns" value="Low tissue specificity"/>
</dbReference>
<dbReference type="MalaCards" id="TUBGCP2"/>
<dbReference type="MIM" id="617817">
    <property type="type" value="gene"/>
</dbReference>
<dbReference type="MIM" id="618737">
    <property type="type" value="phenotype"/>
</dbReference>
<dbReference type="neXtProt" id="NX_Q9BSJ2"/>
<dbReference type="OpenTargets" id="ENSG00000130640"/>
<dbReference type="PharmGKB" id="PA38598"/>
<dbReference type="VEuPathDB" id="HostDB:ENSG00000130640"/>
<dbReference type="eggNOG" id="KOG2001">
    <property type="taxonomic scope" value="Eukaryota"/>
</dbReference>
<dbReference type="GeneTree" id="ENSGT00940000156697"/>
<dbReference type="InParanoid" id="Q9BSJ2"/>
<dbReference type="OMA" id="QNMSGDP"/>
<dbReference type="OrthoDB" id="2192946at2759"/>
<dbReference type="PAN-GO" id="Q9BSJ2">
    <property type="GO annotations" value="10 GO annotations based on evolutionary models"/>
</dbReference>
<dbReference type="PhylomeDB" id="Q9BSJ2"/>
<dbReference type="TreeFam" id="TF324047"/>
<dbReference type="PathwayCommons" id="Q9BSJ2"/>
<dbReference type="Reactome" id="R-HSA-380270">
    <property type="pathway name" value="Recruitment of mitotic centrosome proteins and complexes"/>
</dbReference>
<dbReference type="Reactome" id="R-HSA-380320">
    <property type="pathway name" value="Recruitment of NuMA to mitotic centrosomes"/>
</dbReference>
<dbReference type="SignaLink" id="Q9BSJ2"/>
<dbReference type="SIGNOR" id="Q9BSJ2"/>
<dbReference type="BioGRID-ORCS" id="10844">
    <property type="hits" value="736 hits in 1167 CRISPR screens"/>
</dbReference>
<dbReference type="CD-CODE" id="8C2F96ED">
    <property type="entry name" value="Centrosome"/>
</dbReference>
<dbReference type="ChiTaRS" id="TUBGCP2">
    <property type="organism name" value="human"/>
</dbReference>
<dbReference type="GeneWiki" id="TUBGCP2"/>
<dbReference type="GenomeRNAi" id="10844"/>
<dbReference type="Pharos" id="Q9BSJ2">
    <property type="development level" value="Tbio"/>
</dbReference>
<dbReference type="PRO" id="PR:Q9BSJ2"/>
<dbReference type="Proteomes" id="UP000005640">
    <property type="component" value="Chromosome 10"/>
</dbReference>
<dbReference type="RNAct" id="Q9BSJ2">
    <property type="molecule type" value="protein"/>
</dbReference>
<dbReference type="Bgee" id="ENSG00000130640">
    <property type="expression patterns" value="Expressed in right uterine tube and 195 other cell types or tissues"/>
</dbReference>
<dbReference type="ExpressionAtlas" id="Q9BSJ2">
    <property type="expression patterns" value="baseline and differential"/>
</dbReference>
<dbReference type="GO" id="GO:0005813">
    <property type="term" value="C:centrosome"/>
    <property type="evidence" value="ECO:0000314"/>
    <property type="project" value="HPA"/>
</dbReference>
<dbReference type="GO" id="GO:0036064">
    <property type="term" value="C:ciliary basal body"/>
    <property type="evidence" value="ECO:0000314"/>
    <property type="project" value="HPA"/>
</dbReference>
<dbReference type="GO" id="GO:0005881">
    <property type="term" value="C:cytoplasmic microtubule"/>
    <property type="evidence" value="ECO:0000304"/>
    <property type="project" value="ProtInc"/>
</dbReference>
<dbReference type="GO" id="GO:0005829">
    <property type="term" value="C:cytosol"/>
    <property type="evidence" value="ECO:0000304"/>
    <property type="project" value="Reactome"/>
</dbReference>
<dbReference type="GO" id="GO:0000930">
    <property type="term" value="C:gamma-tubulin complex"/>
    <property type="evidence" value="ECO:0000318"/>
    <property type="project" value="GO_Central"/>
</dbReference>
<dbReference type="GO" id="GO:0016020">
    <property type="term" value="C:membrane"/>
    <property type="evidence" value="ECO:0007005"/>
    <property type="project" value="UniProtKB"/>
</dbReference>
<dbReference type="GO" id="GO:0005815">
    <property type="term" value="C:microtubule organizing center"/>
    <property type="evidence" value="ECO:0000314"/>
    <property type="project" value="UniProtKB"/>
</dbReference>
<dbReference type="GO" id="GO:0005654">
    <property type="term" value="C:nucleoplasm"/>
    <property type="evidence" value="ECO:0000314"/>
    <property type="project" value="HPA"/>
</dbReference>
<dbReference type="GO" id="GO:0000922">
    <property type="term" value="C:spindle pole"/>
    <property type="evidence" value="ECO:0007669"/>
    <property type="project" value="InterPro"/>
</dbReference>
<dbReference type="GO" id="GO:0043015">
    <property type="term" value="F:gamma-tubulin binding"/>
    <property type="evidence" value="ECO:0000318"/>
    <property type="project" value="GO_Central"/>
</dbReference>
<dbReference type="GO" id="GO:0007420">
    <property type="term" value="P:brain development"/>
    <property type="evidence" value="ECO:0000315"/>
    <property type="project" value="UniProtKB"/>
</dbReference>
<dbReference type="GO" id="GO:0031122">
    <property type="term" value="P:cytoplasmic microtubule organization"/>
    <property type="evidence" value="ECO:0000318"/>
    <property type="project" value="GO_Central"/>
</dbReference>
<dbReference type="GO" id="GO:0051321">
    <property type="term" value="P:meiotic cell cycle"/>
    <property type="evidence" value="ECO:0000318"/>
    <property type="project" value="GO_Central"/>
</dbReference>
<dbReference type="GO" id="GO:0007020">
    <property type="term" value="P:microtubule nucleation"/>
    <property type="evidence" value="ECO:0000318"/>
    <property type="project" value="GO_Central"/>
</dbReference>
<dbReference type="GO" id="GO:0000278">
    <property type="term" value="P:mitotic cell cycle"/>
    <property type="evidence" value="ECO:0000318"/>
    <property type="project" value="GO_Central"/>
</dbReference>
<dbReference type="GO" id="GO:0001764">
    <property type="term" value="P:neuron migration"/>
    <property type="evidence" value="ECO:0000315"/>
    <property type="project" value="UniProtKB"/>
</dbReference>
<dbReference type="GO" id="GO:0065003">
    <property type="term" value="P:protein-containing complex assembly"/>
    <property type="evidence" value="ECO:0000304"/>
    <property type="project" value="ProtInc"/>
</dbReference>
<dbReference type="GO" id="GO:0051225">
    <property type="term" value="P:spindle assembly"/>
    <property type="evidence" value="ECO:0000318"/>
    <property type="project" value="GO_Central"/>
</dbReference>
<dbReference type="FunFam" id="1.20.120.1900:FF:000002">
    <property type="entry name" value="Gamma-tubulin complex component"/>
    <property type="match status" value="1"/>
</dbReference>
<dbReference type="Gene3D" id="1.20.120.1900">
    <property type="entry name" value="Gamma-tubulin complex, C-terminal domain"/>
    <property type="match status" value="1"/>
</dbReference>
<dbReference type="InterPro" id="IPR007259">
    <property type="entry name" value="GCP"/>
</dbReference>
<dbReference type="InterPro" id="IPR040457">
    <property type="entry name" value="GCP_C"/>
</dbReference>
<dbReference type="InterPro" id="IPR042241">
    <property type="entry name" value="GCP_C_sf"/>
</dbReference>
<dbReference type="InterPro" id="IPR041470">
    <property type="entry name" value="GCP_N"/>
</dbReference>
<dbReference type="PANTHER" id="PTHR19302">
    <property type="entry name" value="GAMMA TUBULIN COMPLEX PROTEIN"/>
    <property type="match status" value="1"/>
</dbReference>
<dbReference type="PANTHER" id="PTHR19302:SF13">
    <property type="entry name" value="GAMMA-TUBULIN COMPLEX COMPONENT 2"/>
    <property type="match status" value="1"/>
</dbReference>
<dbReference type="Pfam" id="PF04130">
    <property type="entry name" value="GCP_C_terminal"/>
    <property type="match status" value="1"/>
</dbReference>
<dbReference type="Pfam" id="PF17681">
    <property type="entry name" value="GCP_N_terminal"/>
    <property type="match status" value="1"/>
</dbReference>
<comment type="function">
    <text evidence="4 5 6 7 8">Component of the gamma-tubulin ring complex (gTuRC) which mediates microtubule nucleation (PubMed:38305685, PubMed:38609661, PubMed:39321809, PubMed:9566967). The gTuRC regulates the minus-end nucleation of alpha-beta tubulin heterodimers that grow into microtubule protafilaments, a critical step in centrosome duplication and spindle formation (PubMed:38305685, PubMed:38609661, PubMed:39321809). Plays a role in neuronal migration (PubMed:31630790).</text>
</comment>
<comment type="subunit">
    <text evidence="3 5 6 7 8">Component of the gamma-tubulin ring complex (gTuRC) consisting of TUBGCP2, TUBGCP3, TUBGCP4, TUBGCP5 and TUBGCP6 and gamma-tubulin TUBG1 or TUBG2 (PubMed:9566967, PubMed:39321809, PubMed:38609661, PubMed:38305685). TUBGCP2, TUBGCP3, TUBGCP4, TUBGCP5 and TUBGCP6 assemble in a 5:5:2:1:1 stoichiometry; each is associated with a gamma-tubulin, thereby arranging 14 gamma-tubulins in a helical manner (PubMed:39321809, PubMed:38609661, PubMed:38305685). Gamma-tubulin at the first position is blocked by TUBGCP3 at the last position, allowing 13 protafilaments to grow into a microtubule (PubMed:39321809, PubMed:38609661, PubMed:38305685). The gTuRC (via TUBGCP3 and TUBGCP6) interacts with ACTB and MZT1; the interactions form a luminal bridge that stabilizes the initial structure during complex assembly (PubMed:39321809, PubMed:38609661). The gTuRC (via TUBGCP2) interacts with MZT2A/MZT2B and CDK5RAP2 (via CM1 motif); the interactions play a role in gTuRC activation (PubMed:39321809). Interacts with ATF5; the ATF5:PCNT:polyglutamylated tubulin (PGT) tripartite unites the mother centriole and the pericentriolar material (PCM) in the centrosome (PubMed:26213385).</text>
</comment>
<comment type="interaction">
    <interactant intactId="EBI-357881">
        <id>Q9BSJ2</id>
    </interactant>
    <interactant intactId="EBI-748621">
        <id>Q9UJW9</id>
        <label>SERTAD3</label>
    </interactant>
    <organismsDiffer>false</organismsDiffer>
    <experiments>3</experiments>
</comment>
<comment type="subcellular location">
    <subcellularLocation>
        <location evidence="2 8">Cytoplasm</location>
        <location evidence="2 8">Cytoskeleton</location>
        <location evidence="2 8">Microtubule organizing center</location>
        <location evidence="2 8">Centrosome</location>
    </subcellularLocation>
</comment>
<comment type="alternative products">
    <event type="alternative splicing"/>
    <isoform>
        <id>Q9BSJ2-1</id>
        <name>1</name>
        <sequence type="displayed"/>
    </isoform>
    <isoform>
        <id>Q9BSJ2-3</id>
        <name>2</name>
        <sequence type="described" ref="VSP_044698"/>
    </isoform>
    <isoform>
        <id>Q9BSJ2-4</id>
        <name>3</name>
        <sequence type="described" ref="VSP_045982"/>
    </isoform>
    <text>Additional isoforms may exist. May be produced at very low levels due to a premature stop codon in the mRNA, leading to nonsense-mediated mRNA decay.</text>
</comment>
<comment type="tissue specificity">
    <text>Ubiquitously expressed.</text>
</comment>
<comment type="disease" evidence="4">
    <disease id="DI-05737">
        <name>Cortical dysplasia, complex, with other brain malformations 15</name>
        <acronym>CDCBM15</acronym>
        <description>An autosomal recessive disorder characterized by global developmental delay, variably impaired intellectual development, speech delay, facial dysmorphism, microcephaly, and varying degrees of cortical malformations including pachygyria, thin corpus callosum and subcortical band heterotopia. Most patients have generalized seizures.</description>
        <dbReference type="MIM" id="618737"/>
    </disease>
    <text>The disease may be caused by variants affecting the gene represented in this entry.</text>
</comment>
<comment type="similarity">
    <text evidence="11">Belongs to the TUBGCP family.</text>
</comment>
<comment type="sequence caution" evidence="11">
    <conflict type="frameshift">
        <sequence resource="EMBL" id="BC005011"/>
    </conflict>
</comment>
<proteinExistence type="evidence at protein level"/>
<gene>
    <name type="primary">TUBGCP2</name>
    <name type="synonym">GCP2</name>
</gene>
<protein>
    <recommendedName>
        <fullName>Gamma-tubulin complex component 2</fullName>
        <shortName>GCP-2</shortName>
        <shortName>hGCP2</shortName>
    </recommendedName>
    <alternativeName>
        <fullName>Gamma-ring complex protein 103 kDa</fullName>
        <shortName>h103p</shortName>
        <shortName>hGrip103</shortName>
    </alternativeName>
    <alternativeName>
        <fullName>Spindle pole body protein Spc97 homolog</fullName>
        <shortName>hSpc97</shortName>
    </alternativeName>
</protein>
<accession>Q9BSJ2</accession>
<accession>B4DM18</accession>
<accession>B7ZKL8</accession>
<accession>F5H4E0</accession>
<accession>F5H4L0</accession>
<accession>O43632</accession>
<accession>Q5VWX7</accession>
<keyword id="KW-0002">3D-structure</keyword>
<keyword id="KW-0025">Alternative splicing</keyword>
<keyword id="KW-0963">Cytoplasm</keyword>
<keyword id="KW-0206">Cytoskeleton</keyword>
<keyword id="KW-0225">Disease variant</keyword>
<keyword id="KW-0887">Epilepsy</keyword>
<keyword id="KW-0991">Intellectual disability</keyword>
<keyword id="KW-0451">Lissencephaly</keyword>
<keyword id="KW-0493">Microtubule</keyword>
<keyword id="KW-0597">Phosphoprotein</keyword>
<keyword id="KW-1267">Proteomics identification</keyword>
<keyword id="KW-1185">Reference proteome</keyword>
<reference key="1">
    <citation type="journal article" date="1998" name="J. Cell Biol.">
        <title>The mammalian gamma-tubulin complex contains homologues of the yeast spindle pole body components spc97p and spc98p.</title>
        <authorList>
            <person name="Murphy S.M."/>
            <person name="Urbani L."/>
            <person name="Stearns T."/>
        </authorList>
    </citation>
    <scope>NUCLEOTIDE SEQUENCE [MRNA] (ISOFORM 1)</scope>
    <scope>FUNCTION</scope>
    <scope>SUBUNIT</scope>
    <scope>SUBCELLULAR LOCATION</scope>
    <source>
        <tissue>Cervix carcinoma</tissue>
    </source>
</reference>
<reference key="2">
    <citation type="journal article" date="2004" name="Nat. Genet.">
        <title>Complete sequencing and characterization of 21,243 full-length human cDNAs.</title>
        <authorList>
            <person name="Ota T."/>
            <person name="Suzuki Y."/>
            <person name="Nishikawa T."/>
            <person name="Otsuki T."/>
            <person name="Sugiyama T."/>
            <person name="Irie R."/>
            <person name="Wakamatsu A."/>
            <person name="Hayashi K."/>
            <person name="Sato H."/>
            <person name="Nagai K."/>
            <person name="Kimura K."/>
            <person name="Makita H."/>
            <person name="Sekine M."/>
            <person name="Obayashi M."/>
            <person name="Nishi T."/>
            <person name="Shibahara T."/>
            <person name="Tanaka T."/>
            <person name="Ishii S."/>
            <person name="Yamamoto J."/>
            <person name="Saito K."/>
            <person name="Kawai Y."/>
            <person name="Isono Y."/>
            <person name="Nakamura Y."/>
            <person name="Nagahari K."/>
            <person name="Murakami K."/>
            <person name="Yasuda T."/>
            <person name="Iwayanagi T."/>
            <person name="Wagatsuma M."/>
            <person name="Shiratori A."/>
            <person name="Sudo H."/>
            <person name="Hosoiri T."/>
            <person name="Kaku Y."/>
            <person name="Kodaira H."/>
            <person name="Kondo H."/>
            <person name="Sugawara M."/>
            <person name="Takahashi M."/>
            <person name="Kanda K."/>
            <person name="Yokoi T."/>
            <person name="Furuya T."/>
            <person name="Kikkawa E."/>
            <person name="Omura Y."/>
            <person name="Abe K."/>
            <person name="Kamihara K."/>
            <person name="Katsuta N."/>
            <person name="Sato K."/>
            <person name="Tanikawa M."/>
            <person name="Yamazaki M."/>
            <person name="Ninomiya K."/>
            <person name="Ishibashi T."/>
            <person name="Yamashita H."/>
            <person name="Murakawa K."/>
            <person name="Fujimori K."/>
            <person name="Tanai H."/>
            <person name="Kimata M."/>
            <person name="Watanabe M."/>
            <person name="Hiraoka S."/>
            <person name="Chiba Y."/>
            <person name="Ishida S."/>
            <person name="Ono Y."/>
            <person name="Takiguchi S."/>
            <person name="Watanabe S."/>
            <person name="Yosida M."/>
            <person name="Hotuta T."/>
            <person name="Kusano J."/>
            <person name="Kanehori K."/>
            <person name="Takahashi-Fujii A."/>
            <person name="Hara H."/>
            <person name="Tanase T.-O."/>
            <person name="Nomura Y."/>
            <person name="Togiya S."/>
            <person name="Komai F."/>
            <person name="Hara R."/>
            <person name="Takeuchi K."/>
            <person name="Arita M."/>
            <person name="Imose N."/>
            <person name="Musashino K."/>
            <person name="Yuuki H."/>
            <person name="Oshima A."/>
            <person name="Sasaki N."/>
            <person name="Aotsuka S."/>
            <person name="Yoshikawa Y."/>
            <person name="Matsunawa H."/>
            <person name="Ichihara T."/>
            <person name="Shiohata N."/>
            <person name="Sano S."/>
            <person name="Moriya S."/>
            <person name="Momiyama H."/>
            <person name="Satoh N."/>
            <person name="Takami S."/>
            <person name="Terashima Y."/>
            <person name="Suzuki O."/>
            <person name="Nakagawa S."/>
            <person name="Senoh A."/>
            <person name="Mizoguchi H."/>
            <person name="Goto Y."/>
            <person name="Shimizu F."/>
            <person name="Wakebe H."/>
            <person name="Hishigaki H."/>
            <person name="Watanabe T."/>
            <person name="Sugiyama A."/>
            <person name="Takemoto M."/>
            <person name="Kawakami B."/>
            <person name="Yamazaki M."/>
            <person name="Watanabe K."/>
            <person name="Kumagai A."/>
            <person name="Itakura S."/>
            <person name="Fukuzumi Y."/>
            <person name="Fujimori Y."/>
            <person name="Komiyama M."/>
            <person name="Tashiro H."/>
            <person name="Tanigami A."/>
            <person name="Fujiwara T."/>
            <person name="Ono T."/>
            <person name="Yamada K."/>
            <person name="Fujii Y."/>
            <person name="Ozaki K."/>
            <person name="Hirao M."/>
            <person name="Ohmori Y."/>
            <person name="Kawabata A."/>
            <person name="Hikiji T."/>
            <person name="Kobatake N."/>
            <person name="Inagaki H."/>
            <person name="Ikema Y."/>
            <person name="Okamoto S."/>
            <person name="Okitani R."/>
            <person name="Kawakami T."/>
            <person name="Noguchi S."/>
            <person name="Itoh T."/>
            <person name="Shigeta K."/>
            <person name="Senba T."/>
            <person name="Matsumura K."/>
            <person name="Nakajima Y."/>
            <person name="Mizuno T."/>
            <person name="Morinaga M."/>
            <person name="Sasaki M."/>
            <person name="Togashi T."/>
            <person name="Oyama M."/>
            <person name="Hata H."/>
            <person name="Watanabe M."/>
            <person name="Komatsu T."/>
            <person name="Mizushima-Sugano J."/>
            <person name="Satoh T."/>
            <person name="Shirai Y."/>
            <person name="Takahashi Y."/>
            <person name="Nakagawa K."/>
            <person name="Okumura K."/>
            <person name="Nagase T."/>
            <person name="Nomura N."/>
            <person name="Kikuchi H."/>
            <person name="Masuho Y."/>
            <person name="Yamashita R."/>
            <person name="Nakai K."/>
            <person name="Yada T."/>
            <person name="Nakamura Y."/>
            <person name="Ohara O."/>
            <person name="Isogai T."/>
            <person name="Sugano S."/>
        </authorList>
    </citation>
    <scope>NUCLEOTIDE SEQUENCE [LARGE SCALE MRNA] (ISOFORM 2)</scope>
    <source>
        <tissue>Brain</tissue>
    </source>
</reference>
<reference key="3">
    <citation type="journal article" date="2004" name="Nature">
        <title>The DNA sequence and comparative analysis of human chromosome 10.</title>
        <authorList>
            <person name="Deloukas P."/>
            <person name="Earthrowl M.E."/>
            <person name="Grafham D.V."/>
            <person name="Rubenfield M."/>
            <person name="French L."/>
            <person name="Steward C.A."/>
            <person name="Sims S.K."/>
            <person name="Jones M.C."/>
            <person name="Searle S."/>
            <person name="Scott C."/>
            <person name="Howe K."/>
            <person name="Hunt S.E."/>
            <person name="Andrews T.D."/>
            <person name="Gilbert J.G.R."/>
            <person name="Swarbreck D."/>
            <person name="Ashurst J.L."/>
            <person name="Taylor A."/>
            <person name="Battles J."/>
            <person name="Bird C.P."/>
            <person name="Ainscough R."/>
            <person name="Almeida J.P."/>
            <person name="Ashwell R.I.S."/>
            <person name="Ambrose K.D."/>
            <person name="Babbage A.K."/>
            <person name="Bagguley C.L."/>
            <person name="Bailey J."/>
            <person name="Banerjee R."/>
            <person name="Bates K."/>
            <person name="Beasley H."/>
            <person name="Bray-Allen S."/>
            <person name="Brown A.J."/>
            <person name="Brown J.Y."/>
            <person name="Burford D.C."/>
            <person name="Burrill W."/>
            <person name="Burton J."/>
            <person name="Cahill P."/>
            <person name="Camire D."/>
            <person name="Carter N.P."/>
            <person name="Chapman J.C."/>
            <person name="Clark S.Y."/>
            <person name="Clarke G."/>
            <person name="Clee C.M."/>
            <person name="Clegg S."/>
            <person name="Corby N."/>
            <person name="Coulson A."/>
            <person name="Dhami P."/>
            <person name="Dutta I."/>
            <person name="Dunn M."/>
            <person name="Faulkner L."/>
            <person name="Frankish A."/>
            <person name="Frankland J.A."/>
            <person name="Garner P."/>
            <person name="Garnett J."/>
            <person name="Gribble S."/>
            <person name="Griffiths C."/>
            <person name="Grocock R."/>
            <person name="Gustafson E."/>
            <person name="Hammond S."/>
            <person name="Harley J.L."/>
            <person name="Hart E."/>
            <person name="Heath P.D."/>
            <person name="Ho T.P."/>
            <person name="Hopkins B."/>
            <person name="Horne J."/>
            <person name="Howden P.J."/>
            <person name="Huckle E."/>
            <person name="Hynds C."/>
            <person name="Johnson C."/>
            <person name="Johnson D."/>
            <person name="Kana A."/>
            <person name="Kay M."/>
            <person name="Kimberley A.M."/>
            <person name="Kershaw J.K."/>
            <person name="Kokkinaki M."/>
            <person name="Laird G.K."/>
            <person name="Lawlor S."/>
            <person name="Lee H.M."/>
            <person name="Leongamornlert D.A."/>
            <person name="Laird G."/>
            <person name="Lloyd C."/>
            <person name="Lloyd D.M."/>
            <person name="Loveland J."/>
            <person name="Lovell J."/>
            <person name="McLaren S."/>
            <person name="McLay K.E."/>
            <person name="McMurray A."/>
            <person name="Mashreghi-Mohammadi M."/>
            <person name="Matthews L."/>
            <person name="Milne S."/>
            <person name="Nickerson T."/>
            <person name="Nguyen M."/>
            <person name="Overton-Larty E."/>
            <person name="Palmer S.A."/>
            <person name="Pearce A.V."/>
            <person name="Peck A.I."/>
            <person name="Pelan S."/>
            <person name="Phillimore B."/>
            <person name="Porter K."/>
            <person name="Rice C.M."/>
            <person name="Rogosin A."/>
            <person name="Ross M.T."/>
            <person name="Sarafidou T."/>
            <person name="Sehra H.K."/>
            <person name="Shownkeen R."/>
            <person name="Skuce C.D."/>
            <person name="Smith M."/>
            <person name="Standring L."/>
            <person name="Sycamore N."/>
            <person name="Tester J."/>
            <person name="Thorpe A."/>
            <person name="Torcasso W."/>
            <person name="Tracey A."/>
            <person name="Tromans A."/>
            <person name="Tsolas J."/>
            <person name="Wall M."/>
            <person name="Walsh J."/>
            <person name="Wang H."/>
            <person name="Weinstock K."/>
            <person name="West A.P."/>
            <person name="Willey D.L."/>
            <person name="Whitehead S.L."/>
            <person name="Wilming L."/>
            <person name="Wray P.W."/>
            <person name="Young L."/>
            <person name="Chen Y."/>
            <person name="Lovering R.C."/>
            <person name="Moschonas N.K."/>
            <person name="Siebert R."/>
            <person name="Fechtel K."/>
            <person name="Bentley D."/>
            <person name="Durbin R.M."/>
            <person name="Hubbard T."/>
            <person name="Doucette-Stamm L."/>
            <person name="Beck S."/>
            <person name="Smith D.R."/>
            <person name="Rogers J."/>
        </authorList>
    </citation>
    <scope>NUCLEOTIDE SEQUENCE [LARGE SCALE GENOMIC DNA]</scope>
</reference>
<reference key="4">
    <citation type="journal article" date="2004" name="Genome Res.">
        <title>The status, quality, and expansion of the NIH full-length cDNA project: the Mammalian Gene Collection (MGC).</title>
        <authorList>
            <consortium name="The MGC Project Team"/>
        </authorList>
    </citation>
    <scope>NUCLEOTIDE SEQUENCE [LARGE SCALE MRNA] (ISOFORMS 1 AND 3)</scope>
    <source>
        <tissue>Brain</tissue>
        <tissue>Pancreas</tissue>
    </source>
</reference>
<reference key="5">
    <citation type="journal article" date="2003" name="Nature">
        <title>Proteomic characterization of the human centrosome by protein correlation profiling.</title>
        <authorList>
            <person name="Andersen J.S."/>
            <person name="Wilkinson C.J."/>
            <person name="Mayor T."/>
            <person name="Mortensen P."/>
            <person name="Nigg E.A."/>
            <person name="Mann M."/>
        </authorList>
    </citation>
    <scope>IDENTIFICATION BY MASS SPECTROMETRY</scope>
    <scope>SUBCELLULAR LOCATION [LARGE SCALE ANALYSIS]</scope>
    <source>
        <tissue>Lymphoblast</tissue>
    </source>
</reference>
<reference key="6">
    <citation type="journal article" date="2004" name="Genome Biol.">
        <title>An unappreciated role for RNA surveillance.</title>
        <authorList>
            <person name="Hillman R.T."/>
            <person name="Green R.E."/>
            <person name="Brenner S.E."/>
        </authorList>
    </citation>
    <scope>SPLICE ISOFORM(S) THAT ARE POTENTIAL NMD TARGET(S)</scope>
</reference>
<reference key="7">
    <citation type="journal article" date="2005" name="Nat. Biotechnol.">
        <title>Immunoaffinity profiling of tyrosine phosphorylation in cancer cells.</title>
        <authorList>
            <person name="Rush J."/>
            <person name="Moritz A."/>
            <person name="Lee K.A."/>
            <person name="Guo A."/>
            <person name="Goss V.L."/>
            <person name="Spek E.J."/>
            <person name="Zhang H."/>
            <person name="Zha X.-M."/>
            <person name="Polakiewicz R.D."/>
            <person name="Comb M.J."/>
        </authorList>
    </citation>
    <scope>PHOSPHORYLATION [LARGE SCALE ANALYSIS] AT TYR-83</scope>
    <scope>IDENTIFICATION BY MASS SPECTROMETRY [LARGE SCALE ANALYSIS]</scope>
</reference>
<reference key="8">
    <citation type="journal article" date="2011" name="BMC Syst. Biol.">
        <title>Initial characterization of the human central proteome.</title>
        <authorList>
            <person name="Burkard T.R."/>
            <person name="Planyavsky M."/>
            <person name="Kaupe I."/>
            <person name="Breitwieser F.P."/>
            <person name="Buerckstuemmer T."/>
            <person name="Bennett K.L."/>
            <person name="Superti-Furga G."/>
            <person name="Colinge J."/>
        </authorList>
    </citation>
    <scope>IDENTIFICATION BY MASS SPECTROMETRY [LARGE SCALE ANALYSIS]</scope>
</reference>
<reference key="9">
    <citation type="journal article" date="2015" name="Cell">
        <title>ATF5 Connects the Pericentriolar Materials to the Proximal End of the Mother Centriole.</title>
        <authorList>
            <person name="Madarampalli B."/>
            <person name="Yuan Y."/>
            <person name="Liu D."/>
            <person name="Lengel K."/>
            <person name="Xu Y."/>
            <person name="Li G."/>
            <person name="Yang J."/>
            <person name="Liu X."/>
            <person name="Lu Z."/>
            <person name="Liu D.X."/>
        </authorList>
    </citation>
    <scope>INTERACTION WITH ATF5</scope>
</reference>
<reference key="10">
    <citation type="journal article" date="2019" name="Am. J. Hum. Genet.">
        <title>Bi-allelic pathogenic variants in TUBGCP2 cause microcephaly and lissencephaly spectrum disorders.</title>
        <authorList>
            <consortium name="Baylor-Hopkins Center for Mendelian Genomics"/>
            <person name="Mitani T."/>
            <person name="Punetha J."/>
            <person name="Akalin I."/>
            <person name="Pehlivan D."/>
            <person name="Dawidziuk M."/>
            <person name="Coban Akdemir Z."/>
            <person name="Yilmaz S."/>
            <person name="Aslan E."/>
            <person name="Hunter J.V."/>
            <person name="Hijazi H."/>
            <person name="Grochowski C.M."/>
            <person name="Jhangiani S.N."/>
            <person name="Karaca E."/>
            <person name="Fatih J.M."/>
            <person name="Iwanowski P."/>
            <person name="Gambin T."/>
            <person name="Wlasienko P."/>
            <person name="Goszczanska-Ciuchta A."/>
            <person name="Bekiesinska-Figatowska M."/>
            <person name="Hosseini M."/>
            <person name="Arzhangi S."/>
            <person name="Najmabadi H."/>
            <person name="Rosenfeld J.A."/>
            <person name="Du H."/>
            <person name="Marafi D."/>
            <person name="Blaser S."/>
            <person name="Teitelbaum R."/>
            <person name="Silver R."/>
            <person name="Posey J.E."/>
            <person name="Ropers H.H."/>
            <person name="Gibbs R.A."/>
            <person name="Wiszniewski W."/>
            <person name="Lupski J.R."/>
            <person name="Chitayat D."/>
            <person name="Kahrizi K."/>
            <person name="Gawlinski P."/>
        </authorList>
    </citation>
    <scope>INVOLVEMENT IN CDCBM15</scope>
    <scope>VARIANTS CDCBM15 CYS-297; CYS-333 AND PRO-615</scope>
    <scope>FUNCTION</scope>
</reference>
<reference evidence="13" key="11">
    <citation type="journal article" date="2024" name="Dev. Cell">
        <title>CDK5RAP2 activates microtubule nucleator gammaTuRC by facilitating template formation and actin release.</title>
        <authorList>
            <person name="Serna M."/>
            <person name="Zimmermann F."/>
            <person name="Vineethakumari C."/>
            <person name="Gonzalez-Rodriguez N."/>
            <person name="Llorca O."/>
            <person name="Luders J."/>
        </authorList>
    </citation>
    <scope>STRUCTURE BY ELECTRON MICROSCOPY (3.57 ANGSTROMS) OF THE GAMMA-TUBULIN RING COMPLEX IN COMPLEX WITH MZT1; MZT2A; CDK5RAP2; ACTB; TUBA1B AND TUBB3</scope>
    <scope>FUNCTION</scope>
    <scope>SUBUNIT</scope>
</reference>
<reference evidence="14 15 16" key="12">
    <citation type="journal article" date="2024" name="Nat. Struct. Mol. Biol.">
        <title>Structure of the gamma-tubulin ring complex-capped microtubule.</title>
        <authorList>
            <person name="Aher A."/>
            <person name="Urnavicius L."/>
            <person name="Xue A."/>
            <person name="Neselu K."/>
            <person name="Kapoor T.M."/>
        </authorList>
    </citation>
    <scope>STRUCTURE BY ELECTRON MICROSCOPY (7.00 ANGSTROMS) OF THE GAMMA-TUBULIN RING COMPLEX IN COMPLEX WITH MZT1; MZT2A; CDK5RAP2 AND ACTB</scope>
    <scope>FUNCTION</scope>
    <scope>SUBUNIT</scope>
</reference>
<reference evidence="12" key="13">
    <citation type="journal article" date="2024" name="Science">
        <title>Transition of human gamma-tubulin ring complex into a closed conformation during microtubule nucleation.</title>
        <authorList>
            <person name="Brito C."/>
            <person name="Serna M."/>
            <person name="Guerra P."/>
            <person name="Llorca O."/>
            <person name="Surrey T."/>
        </authorList>
    </citation>
    <scope>STRUCTURE BY ELECTRON MICROSCOPY (3.72 ANGSTROMS) OF THE GAMMA-TUBULIN RING COMPLEX</scope>
    <scope>FUNCTION</scope>
    <scope>SUBUNIT</scope>
</reference>
<name>GCP2_HUMAN</name>
<sequence>MSEFRIHHDVNELLSLLRVHGGDGAEVYIDLLQKNRTPYVTTTVSAHSAKVKIAEFSRTPEDFLKKYDELKSKNTRNLDPLVYLLSKLTEDKETLQYLQQNAKERAELAAAAVGSSTTSINVPAAASKISMQELEELRKQLGSVATGSTLQQSLELKRKMLRDKQNKKNSGQHLPIFPAWVYERPALIGDFLIGAGISTDTALPIGTLPLASQESAVVEDLLYVLVGVDGRYVSAQPLAGRQSRTFLVDPNLDLSIRELVHRILPVAASYSAVTRFIEEKSSFEYGQVNHALAAAMRTLVKEHLILVSQLEQLHRQGLLSLQKLWFYIQPAMRTMDILASLATSVDKGECLGGSTLSLLHDRSFSYTGDSQAQELCLYLTKAASAPYFEVLEKWIYRGIIHDPYSEFMVEEHELRKERIQEDYNDKYWDQRYTIVQQQIPSFLQKMADKILSTGKYLNVVRECGHDVTCPVAKEIIYTLKERAYVEQIEKAFNYASKVLLDFLMEEKELVAHLRSIKRYFLMDQGDFFVHFMDLAEEELRKPVEDITPPRLEALLELALRMSTANTDPFKDDLKIDLMPHDLITQLLRVLAIETKQEKAMAHADPTELALSGLEAFSFDYIVKWPLSLIINRKALTRYQMLFRHMFYCKHVERQLCSVWISNKTAKQHSLHSAQWFAGAFTLRQRMLNFVQNIQYYMMFEVMEPTWHILEKNLKSASNIDDVLGHHTGFLDTCLKDCMLTNPELLKVFSKLMSVCVMFTNCMQKFTQSMKLDGELGGQTLEHSTVLGLPAGAEERARKELARKHLAEHADTVQLVSGFEATINKFDKNFSAHLLDLLARLSIYSTSDCEHGMASVISRLDFNGFYTERLERLSAERSQKATPQVPVLRGPPAPAPRVAVTAQ</sequence>